<name>GATA_ECTM1</name>
<reference key="1">
    <citation type="submission" date="2007-04" db="EMBL/GenBank/DDBJ databases">
        <title>Complete sequence of Pseudomonas mendocina ymp.</title>
        <authorList>
            <consortium name="US DOE Joint Genome Institute"/>
            <person name="Copeland A."/>
            <person name="Lucas S."/>
            <person name="Lapidus A."/>
            <person name="Barry K."/>
            <person name="Glavina del Rio T."/>
            <person name="Dalin E."/>
            <person name="Tice H."/>
            <person name="Pitluck S."/>
            <person name="Kiss H."/>
            <person name="Brettin T."/>
            <person name="Detter J.C."/>
            <person name="Bruce D."/>
            <person name="Han C."/>
            <person name="Schmutz J."/>
            <person name="Larimer F."/>
            <person name="Land M."/>
            <person name="Hauser L."/>
            <person name="Kyrpides N."/>
            <person name="Mikhailova N."/>
            <person name="Hersman L."/>
            <person name="Dubois J."/>
            <person name="Maurice P."/>
            <person name="Richardson P."/>
        </authorList>
    </citation>
    <scope>NUCLEOTIDE SEQUENCE [LARGE SCALE GENOMIC DNA]</scope>
    <source>
        <strain>ymp</strain>
    </source>
</reference>
<sequence>MHQMTLAEIAKGLEAKQFSAEELSRALLARIAQLDPQLNSFITVTEDLAIEQAKAADARRAAGENGALLGAPIAHKDLFCTNGVLTSCGSKILTGFKAPYDATVVEKLKAAGTVTLGKLNMDEFAMGSANESSHYGAVKNPWDTSRVPGGSSGGSAAAVAARLLPAATGTDTGGSIRQPAALTNLTGIKPTYGRVSRWGMIAYASSLDQGGPLARDAFDCALLLGAMAGFDAKDSTSVDQPVDDYLAALAQPLAGLRIGLPKEYFGAGLDARIGEKVMAVVEELKKLGATVKDISLPNMQHAIPAYYVIAPAEASSNLSRFDGVRFGYRCENPVNLEDLYKRSRGEGFGAEVKRRIMVGTYALSAGYYDAYYIKAQQIRRLIKNDFVAAFKDVDVILGPTTPNLAWKLGEKNADPVSAYLEDIYTITANLAGIPGLSMPAGFVDGLPVGVQLLGNYFQEGRLLNVAHQYQQVSDWHKQAPTGF</sequence>
<accession>A4XQK6</accession>
<comment type="function">
    <text evidence="1">Allows the formation of correctly charged Gln-tRNA(Gln) through the transamidation of misacylated Glu-tRNA(Gln) in organisms which lack glutaminyl-tRNA synthetase. The reaction takes place in the presence of glutamine and ATP through an activated gamma-phospho-Glu-tRNA(Gln).</text>
</comment>
<comment type="catalytic activity">
    <reaction evidence="1">
        <text>L-glutamyl-tRNA(Gln) + L-glutamine + ATP + H2O = L-glutaminyl-tRNA(Gln) + L-glutamate + ADP + phosphate + H(+)</text>
        <dbReference type="Rhea" id="RHEA:17521"/>
        <dbReference type="Rhea" id="RHEA-COMP:9681"/>
        <dbReference type="Rhea" id="RHEA-COMP:9684"/>
        <dbReference type="ChEBI" id="CHEBI:15377"/>
        <dbReference type="ChEBI" id="CHEBI:15378"/>
        <dbReference type="ChEBI" id="CHEBI:29985"/>
        <dbReference type="ChEBI" id="CHEBI:30616"/>
        <dbReference type="ChEBI" id="CHEBI:43474"/>
        <dbReference type="ChEBI" id="CHEBI:58359"/>
        <dbReference type="ChEBI" id="CHEBI:78520"/>
        <dbReference type="ChEBI" id="CHEBI:78521"/>
        <dbReference type="ChEBI" id="CHEBI:456216"/>
        <dbReference type="EC" id="6.3.5.7"/>
    </reaction>
</comment>
<comment type="subunit">
    <text evidence="1">Heterotrimer of A, B and C subunits.</text>
</comment>
<comment type="similarity">
    <text evidence="1">Belongs to the amidase family. GatA subfamily.</text>
</comment>
<keyword id="KW-0067">ATP-binding</keyword>
<keyword id="KW-0436">Ligase</keyword>
<keyword id="KW-0547">Nucleotide-binding</keyword>
<keyword id="KW-0648">Protein biosynthesis</keyword>
<protein>
    <recommendedName>
        <fullName evidence="1">Glutamyl-tRNA(Gln) amidotransferase subunit A</fullName>
        <shortName evidence="1">Glu-ADT subunit A</shortName>
        <ecNumber evidence="1">6.3.5.7</ecNumber>
    </recommendedName>
</protein>
<evidence type="ECO:0000255" key="1">
    <source>
        <dbReference type="HAMAP-Rule" id="MF_00120"/>
    </source>
</evidence>
<organism>
    <name type="scientific">Ectopseudomonas mendocina (strain ymp)</name>
    <name type="common">Pseudomonas mendocina</name>
    <dbReference type="NCBI Taxonomy" id="399739"/>
    <lineage>
        <taxon>Bacteria</taxon>
        <taxon>Pseudomonadati</taxon>
        <taxon>Pseudomonadota</taxon>
        <taxon>Gammaproteobacteria</taxon>
        <taxon>Pseudomonadales</taxon>
        <taxon>Pseudomonadaceae</taxon>
        <taxon>Ectopseudomonas</taxon>
    </lineage>
</organism>
<gene>
    <name evidence="1" type="primary">gatA</name>
    <name type="ordered locus">Pmen_0854</name>
</gene>
<dbReference type="EC" id="6.3.5.7" evidence="1"/>
<dbReference type="EMBL" id="CP000680">
    <property type="protein sequence ID" value="ABP83622.1"/>
    <property type="molecule type" value="Genomic_DNA"/>
</dbReference>
<dbReference type="SMR" id="A4XQK6"/>
<dbReference type="STRING" id="399739.Pmen_0854"/>
<dbReference type="KEGG" id="pmy:Pmen_0854"/>
<dbReference type="PATRIC" id="fig|399739.8.peg.862"/>
<dbReference type="eggNOG" id="COG0154">
    <property type="taxonomic scope" value="Bacteria"/>
</dbReference>
<dbReference type="HOGENOM" id="CLU_009600_0_3_6"/>
<dbReference type="OrthoDB" id="9811471at2"/>
<dbReference type="GO" id="GO:0030956">
    <property type="term" value="C:glutamyl-tRNA(Gln) amidotransferase complex"/>
    <property type="evidence" value="ECO:0007669"/>
    <property type="project" value="InterPro"/>
</dbReference>
<dbReference type="GO" id="GO:0005524">
    <property type="term" value="F:ATP binding"/>
    <property type="evidence" value="ECO:0007669"/>
    <property type="project" value="UniProtKB-KW"/>
</dbReference>
<dbReference type="GO" id="GO:0050567">
    <property type="term" value="F:glutaminyl-tRNA synthase (glutamine-hydrolyzing) activity"/>
    <property type="evidence" value="ECO:0007669"/>
    <property type="project" value="UniProtKB-UniRule"/>
</dbReference>
<dbReference type="GO" id="GO:0006412">
    <property type="term" value="P:translation"/>
    <property type="evidence" value="ECO:0007669"/>
    <property type="project" value="UniProtKB-UniRule"/>
</dbReference>
<dbReference type="Gene3D" id="3.90.1300.10">
    <property type="entry name" value="Amidase signature (AS) domain"/>
    <property type="match status" value="1"/>
</dbReference>
<dbReference type="HAMAP" id="MF_00120">
    <property type="entry name" value="GatA"/>
    <property type="match status" value="1"/>
</dbReference>
<dbReference type="InterPro" id="IPR000120">
    <property type="entry name" value="Amidase"/>
</dbReference>
<dbReference type="InterPro" id="IPR020556">
    <property type="entry name" value="Amidase_CS"/>
</dbReference>
<dbReference type="InterPro" id="IPR023631">
    <property type="entry name" value="Amidase_dom"/>
</dbReference>
<dbReference type="InterPro" id="IPR036928">
    <property type="entry name" value="AS_sf"/>
</dbReference>
<dbReference type="InterPro" id="IPR004412">
    <property type="entry name" value="GatA"/>
</dbReference>
<dbReference type="NCBIfam" id="TIGR00132">
    <property type="entry name" value="gatA"/>
    <property type="match status" value="1"/>
</dbReference>
<dbReference type="PANTHER" id="PTHR11895:SF151">
    <property type="entry name" value="GLUTAMYL-TRNA(GLN) AMIDOTRANSFERASE SUBUNIT A"/>
    <property type="match status" value="1"/>
</dbReference>
<dbReference type="PANTHER" id="PTHR11895">
    <property type="entry name" value="TRANSAMIDASE"/>
    <property type="match status" value="1"/>
</dbReference>
<dbReference type="Pfam" id="PF01425">
    <property type="entry name" value="Amidase"/>
    <property type="match status" value="1"/>
</dbReference>
<dbReference type="SUPFAM" id="SSF75304">
    <property type="entry name" value="Amidase signature (AS) enzymes"/>
    <property type="match status" value="1"/>
</dbReference>
<dbReference type="PROSITE" id="PS00571">
    <property type="entry name" value="AMIDASES"/>
    <property type="match status" value="1"/>
</dbReference>
<proteinExistence type="inferred from homology"/>
<feature type="chain" id="PRO_1000015888" description="Glutamyl-tRNA(Gln) amidotransferase subunit A">
    <location>
        <begin position="1"/>
        <end position="483"/>
    </location>
</feature>
<feature type="active site" description="Charge relay system" evidence="1">
    <location>
        <position position="76"/>
    </location>
</feature>
<feature type="active site" description="Charge relay system" evidence="1">
    <location>
        <position position="151"/>
    </location>
</feature>
<feature type="active site" description="Acyl-ester intermediate" evidence="1">
    <location>
        <position position="175"/>
    </location>
</feature>